<accession>F8DT93</accession>
<accession>P74997</accession>
<accession>Q5NQC3</accession>
<dbReference type="EC" id="7.6.2.-" evidence="1"/>
<dbReference type="EMBL" id="X84019">
    <property type="protein sequence ID" value="CAA58842.1"/>
    <property type="molecule type" value="Genomic_DNA"/>
</dbReference>
<dbReference type="EMBL" id="CP002850">
    <property type="protein sequence ID" value="AEH62824.1"/>
    <property type="molecule type" value="Genomic_DNA"/>
</dbReference>
<dbReference type="PIR" id="S71374">
    <property type="entry name" value="S71374"/>
</dbReference>
<dbReference type="RefSeq" id="WP_014500819.1">
    <property type="nucleotide sequence ID" value="NC_017262.1"/>
</dbReference>
<dbReference type="SMR" id="F8DT93"/>
<dbReference type="KEGG" id="zmm:Zmob_0989"/>
<dbReference type="eggNOG" id="COG1136">
    <property type="taxonomic scope" value="Bacteria"/>
</dbReference>
<dbReference type="HOGENOM" id="CLU_000604_1_22_5"/>
<dbReference type="OrthoDB" id="7202172at2"/>
<dbReference type="Proteomes" id="UP000001494">
    <property type="component" value="Chromosome"/>
</dbReference>
<dbReference type="GO" id="GO:0005886">
    <property type="term" value="C:plasma membrane"/>
    <property type="evidence" value="ECO:0007669"/>
    <property type="project" value="UniProtKB-SubCell"/>
</dbReference>
<dbReference type="GO" id="GO:0005524">
    <property type="term" value="F:ATP binding"/>
    <property type="evidence" value="ECO:0007669"/>
    <property type="project" value="UniProtKB-KW"/>
</dbReference>
<dbReference type="GO" id="GO:0016887">
    <property type="term" value="F:ATP hydrolysis activity"/>
    <property type="evidence" value="ECO:0007669"/>
    <property type="project" value="InterPro"/>
</dbReference>
<dbReference type="GO" id="GO:0022857">
    <property type="term" value="F:transmembrane transporter activity"/>
    <property type="evidence" value="ECO:0007669"/>
    <property type="project" value="TreeGrafter"/>
</dbReference>
<dbReference type="GO" id="GO:0044874">
    <property type="term" value="P:lipoprotein localization to outer membrane"/>
    <property type="evidence" value="ECO:0007669"/>
    <property type="project" value="TreeGrafter"/>
</dbReference>
<dbReference type="GO" id="GO:0089705">
    <property type="term" value="P:protein localization to outer membrane"/>
    <property type="evidence" value="ECO:0007669"/>
    <property type="project" value="TreeGrafter"/>
</dbReference>
<dbReference type="CDD" id="cd03255">
    <property type="entry name" value="ABC_MJ0796_LolCDE_FtsE"/>
    <property type="match status" value="1"/>
</dbReference>
<dbReference type="FunFam" id="3.40.50.300:FF:000032">
    <property type="entry name" value="Export ABC transporter ATP-binding protein"/>
    <property type="match status" value="1"/>
</dbReference>
<dbReference type="Gene3D" id="3.40.50.300">
    <property type="entry name" value="P-loop containing nucleotide triphosphate hydrolases"/>
    <property type="match status" value="1"/>
</dbReference>
<dbReference type="InterPro" id="IPR003593">
    <property type="entry name" value="AAA+_ATPase"/>
</dbReference>
<dbReference type="InterPro" id="IPR003439">
    <property type="entry name" value="ABC_transporter-like_ATP-bd"/>
</dbReference>
<dbReference type="InterPro" id="IPR017871">
    <property type="entry name" value="ABC_transporter-like_CS"/>
</dbReference>
<dbReference type="InterPro" id="IPR015854">
    <property type="entry name" value="ABC_transpr_LolD-like"/>
</dbReference>
<dbReference type="InterPro" id="IPR017911">
    <property type="entry name" value="MacB-like_ATP-bd"/>
</dbReference>
<dbReference type="InterPro" id="IPR027417">
    <property type="entry name" value="P-loop_NTPase"/>
</dbReference>
<dbReference type="PANTHER" id="PTHR24220">
    <property type="entry name" value="IMPORT ATP-BINDING PROTEIN"/>
    <property type="match status" value="1"/>
</dbReference>
<dbReference type="PANTHER" id="PTHR24220:SF689">
    <property type="entry name" value="LIPOPROTEIN-RELEASING SYSTEM ATP-BINDING PROTEIN LOLD"/>
    <property type="match status" value="1"/>
</dbReference>
<dbReference type="Pfam" id="PF00005">
    <property type="entry name" value="ABC_tran"/>
    <property type="match status" value="1"/>
</dbReference>
<dbReference type="SMART" id="SM00382">
    <property type="entry name" value="AAA"/>
    <property type="match status" value="1"/>
</dbReference>
<dbReference type="SUPFAM" id="SSF52540">
    <property type="entry name" value="P-loop containing nucleoside triphosphate hydrolases"/>
    <property type="match status" value="1"/>
</dbReference>
<dbReference type="PROSITE" id="PS00211">
    <property type="entry name" value="ABC_TRANSPORTER_1"/>
    <property type="match status" value="1"/>
</dbReference>
<dbReference type="PROSITE" id="PS50893">
    <property type="entry name" value="ABC_TRANSPORTER_2"/>
    <property type="match status" value="1"/>
</dbReference>
<dbReference type="PROSITE" id="PS51244">
    <property type="entry name" value="LOLD"/>
    <property type="match status" value="1"/>
</dbReference>
<evidence type="ECO:0000255" key="1">
    <source>
        <dbReference type="HAMAP-Rule" id="MF_01708"/>
    </source>
</evidence>
<evidence type="ECO:0000305" key="2"/>
<organism>
    <name type="scientific">Zymomonas mobilis subsp. mobilis (strain ATCC 10988 / DSM 424 / LMG 404 / NCIMB 8938 / NRRL B-806 / ZM1)</name>
    <dbReference type="NCBI Taxonomy" id="555217"/>
    <lineage>
        <taxon>Bacteria</taxon>
        <taxon>Pseudomonadati</taxon>
        <taxon>Pseudomonadota</taxon>
        <taxon>Alphaproteobacteria</taxon>
        <taxon>Sphingomonadales</taxon>
        <taxon>Zymomonadaceae</taxon>
        <taxon>Zymomonas</taxon>
    </lineage>
</organism>
<reference key="1">
    <citation type="journal article" date="1996" name="Arch. Microbiol.">
        <title>The gluEMP operon from Zymomonas mobilis encodes a high-affinity glutamate carrier with similarity to binding-protein-dependent transport systems.</title>
        <authorList>
            <person name="Peekhaus N."/>
            <person name="Kramer R."/>
        </authorList>
    </citation>
    <scope>NUCLEOTIDE SEQUENCE [GENOMIC DNA]</scope>
    <source>
        <strain>ATCC 10988 / DSM 424 / CCUG 17860 / LMG 404 / NCIMB 8938 / NRRL B-806 / ZM1</strain>
    </source>
</reference>
<reference key="2">
    <citation type="journal article" date="2011" name="J. Bacteriol.">
        <title>Genome sequence of the ethanol-producing Zymomonas mobilis subsp. mobilis lectotype strain ATCC 10988.</title>
        <authorList>
            <person name="Pappas K.M."/>
            <person name="Kouvelis V.N."/>
            <person name="Saunders E."/>
            <person name="Brettin T.S."/>
            <person name="Bruce D."/>
            <person name="Detter C."/>
            <person name="Balakireva M."/>
            <person name="Han C.S."/>
            <person name="Savvakis G."/>
            <person name="Kyrpides N.C."/>
            <person name="Typas M.A."/>
        </authorList>
    </citation>
    <scope>NUCLEOTIDE SEQUENCE [LARGE SCALE GENOMIC DNA]</scope>
    <source>
        <strain>ATCC 10988 / DSM 424 / CCUG 17860 / LMG 404 / NCIMB 8938 / NRRL B-806 / ZM1</strain>
    </source>
</reference>
<sequence length="232" mass="25835">MNSPLSYNNVIEVTDLQRAFKQGEHEIQILRGIDLIVRRGEILALLGPSGAGKSTFLQAIGLLENGFTGSINILGQEIGSLNDKERTAIRRDHLGFVYQFHHLLPDFSALENVMLPQLIQGKSSHQAKEHAHFLLNSLKLEERLKHYPSQLSGGEQQRVAVARALANRPALVLADEPTGNLDEATGDIVLHEFLRLVRRQGSAAIIATHNMAMARKMDRIVTLHDGRLIEEY</sequence>
<keyword id="KW-0067">ATP-binding</keyword>
<keyword id="KW-0997">Cell inner membrane</keyword>
<keyword id="KW-1003">Cell membrane</keyword>
<keyword id="KW-0472">Membrane</keyword>
<keyword id="KW-0547">Nucleotide-binding</keyword>
<keyword id="KW-1278">Translocase</keyword>
<keyword id="KW-0813">Transport</keyword>
<proteinExistence type="inferred from homology"/>
<gene>
    <name evidence="1" type="primary">lolD</name>
    <name type="ordered locus">Zmob_0989</name>
</gene>
<protein>
    <recommendedName>
        <fullName evidence="1">Lipoprotein-releasing system ATP-binding protein LolD</fullName>
        <ecNumber evidence="1">7.6.2.-</ecNumber>
    </recommendedName>
</protein>
<feature type="chain" id="PRO_0000414231" description="Lipoprotein-releasing system ATP-binding protein LolD">
    <location>
        <begin position="1"/>
        <end position="232"/>
    </location>
</feature>
<feature type="domain" description="ABC transporter" evidence="1">
    <location>
        <begin position="11"/>
        <end position="232"/>
    </location>
</feature>
<feature type="binding site" evidence="1">
    <location>
        <begin position="47"/>
        <end position="54"/>
    </location>
    <ligand>
        <name>ATP</name>
        <dbReference type="ChEBI" id="CHEBI:30616"/>
    </ligand>
</feature>
<feature type="sequence conflict" description="In Ref. 1; CAA58842." evidence="2" ref="1">
    <original>H</original>
    <variation>D</variation>
    <location>
        <position position="25"/>
    </location>
</feature>
<feature type="sequence conflict" description="In Ref. 1; CAA58842." evidence="2" ref="1">
    <original>R</original>
    <variation>H</variation>
    <location>
        <position position="31"/>
    </location>
</feature>
<feature type="sequence conflict" description="In Ref. 1; CAA58842." evidence="2" ref="1">
    <original>Q</original>
    <variation>R</variation>
    <location>
        <position position="58"/>
    </location>
</feature>
<feature type="sequence conflict" description="In Ref. 1; CAA58842." evidence="2" ref="1">
    <original>G</original>
    <variation>S</variation>
    <location>
        <position position="79"/>
    </location>
</feature>
<feature type="sequence conflict" description="In Ref. 1; CAA58842." evidence="2" ref="1">
    <original>H</original>
    <variation>Y</variation>
    <location>
        <position position="93"/>
    </location>
</feature>
<feature type="sequence conflict" description="In Ref. 1; CAA58842." evidence="2" ref="1">
    <original>D</original>
    <variation>H</variation>
    <location>
        <position position="106"/>
    </location>
</feature>
<feature type="sequence conflict" description="In Ref. 1; CAA58842." evidence="2" ref="1">
    <original>S</original>
    <variation>P</variation>
    <location>
        <position position="124"/>
    </location>
</feature>
<feature type="sequence conflict" description="In Ref. 1; CAA58842." evidence="2" ref="1">
    <original>E</original>
    <variation>Q</variation>
    <location>
        <position position="155"/>
    </location>
</feature>
<feature type="sequence conflict" description="In Ref. 1; CAA58842." evidence="2" ref="1">
    <original>G</original>
    <variation>S</variation>
    <location>
        <position position="179"/>
    </location>
</feature>
<feature type="sequence conflict" description="In Ref. 1; CAA58842." evidence="2" ref="1">
    <original>R</original>
    <variation>G</variation>
    <location>
        <position position="199"/>
    </location>
</feature>
<feature type="sequence conflict" description="In Ref. 1; CAA58842." evidence="2" ref="1">
    <original>A</original>
    <variation>T</variation>
    <location>
        <position position="203"/>
    </location>
</feature>
<name>LOLD_ZYMMA</name>
<comment type="function">
    <text evidence="1">Part of the ABC transporter complex LolCDE involved in the translocation of mature outer membrane-directed lipoproteins, from the inner membrane to the periplasmic chaperone, LolA. Responsible for the formation of the LolA-lipoprotein complex in an ATP-dependent manner.</text>
</comment>
<comment type="subunit">
    <text evidence="1">The complex is composed of two ATP-binding proteins (LolD) and two transmembrane proteins (LolC and LolE).</text>
</comment>
<comment type="subcellular location">
    <subcellularLocation>
        <location evidence="1">Cell inner membrane</location>
        <topology evidence="1">Peripheral membrane protein</topology>
    </subcellularLocation>
</comment>
<comment type="similarity">
    <text evidence="1">Belongs to the ABC transporter superfamily. Lipoprotein translocase (TC 3.A.1.125) family.</text>
</comment>